<name>IF4A_SCHPO</name>
<protein>
    <recommendedName>
        <fullName>ATP-dependent RNA helicase eIF4A</fullName>
        <ecNumber>3.6.4.13</ecNumber>
    </recommendedName>
    <alternativeName>
        <fullName>Eukaryotic initiation factor 4A</fullName>
        <shortName>eIF-4A</shortName>
    </alternativeName>
    <alternativeName>
        <fullName>Translation initiation factor 1</fullName>
    </alternativeName>
</protein>
<accession>P47943</accession>
<comment type="function">
    <text evidence="1">ATP-dependent RNA helicase which is a subunit of the eIF4F complex involved in cap recognition and is required for mRNA binding to ribosome. In the current model of translation initiation, eIF4A unwinds RNA secondary structures in the 5'-UTR of mRNAs which is necessary to allow efficient binding of the small ribosomal subunit, and subsequent scanning for the initiator codon (By similarity).</text>
</comment>
<comment type="catalytic activity">
    <reaction>
        <text>ATP + H2O = ADP + phosphate + H(+)</text>
        <dbReference type="Rhea" id="RHEA:13065"/>
        <dbReference type="ChEBI" id="CHEBI:15377"/>
        <dbReference type="ChEBI" id="CHEBI:15378"/>
        <dbReference type="ChEBI" id="CHEBI:30616"/>
        <dbReference type="ChEBI" id="CHEBI:43474"/>
        <dbReference type="ChEBI" id="CHEBI:456216"/>
        <dbReference type="EC" id="3.6.4.13"/>
    </reaction>
</comment>
<comment type="subunit">
    <text evidence="1">Component of the eIF4F complex, which composition varies with external and internal environmental conditions. It is composed of at least eIF4A, eIF4E and eIF4G (By similarity).</text>
</comment>
<comment type="subcellular location">
    <subcellularLocation>
        <location evidence="1">Cytoplasm</location>
    </subcellularLocation>
</comment>
<comment type="domain">
    <text>The Q motif is unique to and characteristic of the DEAD box family of RNA helicases and controls ATP binding and hydrolysis.</text>
</comment>
<comment type="similarity">
    <text evidence="5">Belongs to the DEAD box helicase family. eIF4A subfamily.</text>
</comment>
<sequence length="392" mass="44436">MVDQLEDSVIETNYDEVIDTFDDMNLKPELLRGIYAYGFERPSAIQQRAIMPILGERDVLAQAQSGTGKTATFSISVLQKIDTSLKQCQALILAPTRELAQQIQKVVVALGDLMNVECHACIGGTLVRDDMAALQAGVHVVVGTPGRVHDMIQRRALPTDAVQMFVLDEADEMLSRGFKDQIYDIFQLLPPTAQVVLLSATMPQDVLEVTTKFMRDPIRILVKKDELTLEGIKQFYVAVEKEEWKLDTLCDLYETVTVTQAVIFCNTRRKVDWLTEQLTERDFTVSSMHGDMDQAQRDTLMHEFRTGSSRILITTDLLARGIDVQQVSLVINYDLPANRENYIHRIGRGGRFGRKGVSINFVTNDDVRMMREIEQFYNTHIEEMPMNIADLI</sequence>
<gene>
    <name type="primary">tif1</name>
    <name type="synonym">tif41</name>
    <name type="ORF">SPAC1006.07</name>
</gene>
<dbReference type="EC" id="3.6.4.13"/>
<dbReference type="EMBL" id="X80796">
    <property type="protein sequence ID" value="CAA56772.1"/>
    <property type="molecule type" value="mRNA"/>
</dbReference>
<dbReference type="EMBL" id="L40627">
    <property type="protein sequence ID" value="AAB61679.1"/>
    <property type="molecule type" value="mRNA"/>
</dbReference>
<dbReference type="EMBL" id="CU329670">
    <property type="protein sequence ID" value="CAB60237.1"/>
    <property type="molecule type" value="Genomic_DNA"/>
</dbReference>
<dbReference type="PIR" id="S71745">
    <property type="entry name" value="S71745"/>
</dbReference>
<dbReference type="RefSeq" id="NP_594854.1">
    <property type="nucleotide sequence ID" value="NM_001020283.2"/>
</dbReference>
<dbReference type="SMR" id="P47943"/>
<dbReference type="BioGRID" id="279388">
    <property type="interactions" value="13"/>
</dbReference>
<dbReference type="FunCoup" id="P47943">
    <property type="interactions" value="502"/>
</dbReference>
<dbReference type="STRING" id="284812.P47943"/>
<dbReference type="iPTMnet" id="P47943"/>
<dbReference type="PaxDb" id="4896-SPAC1006.07.1"/>
<dbReference type="EnsemblFungi" id="SPAC1006.07.1">
    <property type="protein sequence ID" value="SPAC1006.07.1:pep"/>
    <property type="gene ID" value="SPAC1006.07"/>
</dbReference>
<dbReference type="GeneID" id="2542948"/>
<dbReference type="KEGG" id="spo:2542948"/>
<dbReference type="PomBase" id="SPAC1006.07">
    <property type="gene designation" value="tif1"/>
</dbReference>
<dbReference type="VEuPathDB" id="FungiDB:SPAC1006.07"/>
<dbReference type="eggNOG" id="KOG0327">
    <property type="taxonomic scope" value="Eukaryota"/>
</dbReference>
<dbReference type="HOGENOM" id="CLU_003041_1_0_1"/>
<dbReference type="InParanoid" id="P47943"/>
<dbReference type="OMA" id="FGCQALV"/>
<dbReference type="PhylomeDB" id="P47943"/>
<dbReference type="Reactome" id="R-SPO-156827">
    <property type="pathway name" value="L13a-mediated translational silencing of Ceruloplasmin expression"/>
</dbReference>
<dbReference type="Reactome" id="R-SPO-72649">
    <property type="pathway name" value="Translation initiation complex formation"/>
</dbReference>
<dbReference type="Reactome" id="R-SPO-72662">
    <property type="pathway name" value="Activation of the mRNA upon binding of the cap-binding complex and eIFs, and subsequent binding to 43S"/>
</dbReference>
<dbReference type="Reactome" id="R-SPO-72702">
    <property type="pathway name" value="Ribosomal scanning and start codon recognition"/>
</dbReference>
<dbReference type="Reactome" id="R-SPO-72706">
    <property type="pathway name" value="GTP hydrolysis and joining of the 60S ribosomal subunit"/>
</dbReference>
<dbReference type="PRO" id="PR:P47943"/>
<dbReference type="Proteomes" id="UP000002485">
    <property type="component" value="Chromosome I"/>
</dbReference>
<dbReference type="GO" id="GO:0010494">
    <property type="term" value="C:cytoplasmic stress granule"/>
    <property type="evidence" value="ECO:0000318"/>
    <property type="project" value="GO_Central"/>
</dbReference>
<dbReference type="GO" id="GO:0005829">
    <property type="term" value="C:cytosol"/>
    <property type="evidence" value="ECO:0007005"/>
    <property type="project" value="PomBase"/>
</dbReference>
<dbReference type="GO" id="GO:0016281">
    <property type="term" value="C:eukaryotic translation initiation factor 4F complex"/>
    <property type="evidence" value="ECO:0000266"/>
    <property type="project" value="PomBase"/>
</dbReference>
<dbReference type="GO" id="GO:0005524">
    <property type="term" value="F:ATP binding"/>
    <property type="evidence" value="ECO:0007669"/>
    <property type="project" value="UniProtKB-KW"/>
</dbReference>
<dbReference type="GO" id="GO:0016887">
    <property type="term" value="F:ATP hydrolysis activity"/>
    <property type="evidence" value="ECO:0007669"/>
    <property type="project" value="RHEA"/>
</dbReference>
<dbReference type="GO" id="GO:0003723">
    <property type="term" value="F:RNA binding"/>
    <property type="evidence" value="ECO:0007669"/>
    <property type="project" value="UniProtKB-KW"/>
</dbReference>
<dbReference type="GO" id="GO:0003724">
    <property type="term" value="F:RNA helicase activity"/>
    <property type="evidence" value="ECO:0000266"/>
    <property type="project" value="PomBase"/>
</dbReference>
<dbReference type="GO" id="GO:0003743">
    <property type="term" value="F:translation initiation factor activity"/>
    <property type="evidence" value="ECO:0000315"/>
    <property type="project" value="PomBase"/>
</dbReference>
<dbReference type="GO" id="GO:0002183">
    <property type="term" value="P:cytoplasmic translational initiation"/>
    <property type="evidence" value="ECO:0000315"/>
    <property type="project" value="PomBase"/>
</dbReference>
<dbReference type="CDD" id="cd18046">
    <property type="entry name" value="DEADc_EIF4AII_EIF4AI_DDX2"/>
    <property type="match status" value="1"/>
</dbReference>
<dbReference type="CDD" id="cd18787">
    <property type="entry name" value="SF2_C_DEAD"/>
    <property type="match status" value="1"/>
</dbReference>
<dbReference type="FunFam" id="3.40.50.300:FF:000089">
    <property type="entry name" value="Eukaryotic initiation factor 4A-II"/>
    <property type="match status" value="1"/>
</dbReference>
<dbReference type="FunFam" id="3.40.50.300:FF:000031">
    <property type="entry name" value="Eukaryotic initiation factor 4A-III"/>
    <property type="match status" value="1"/>
</dbReference>
<dbReference type="Gene3D" id="3.40.50.300">
    <property type="entry name" value="P-loop containing nucleotide triphosphate hydrolases"/>
    <property type="match status" value="2"/>
</dbReference>
<dbReference type="InterPro" id="IPR011545">
    <property type="entry name" value="DEAD/DEAH_box_helicase_dom"/>
</dbReference>
<dbReference type="InterPro" id="IPR044728">
    <property type="entry name" value="EIF4A_DEADc"/>
</dbReference>
<dbReference type="InterPro" id="IPR014001">
    <property type="entry name" value="Helicase_ATP-bd"/>
</dbReference>
<dbReference type="InterPro" id="IPR001650">
    <property type="entry name" value="Helicase_C-like"/>
</dbReference>
<dbReference type="InterPro" id="IPR027417">
    <property type="entry name" value="P-loop_NTPase"/>
</dbReference>
<dbReference type="InterPro" id="IPR000629">
    <property type="entry name" value="RNA-helicase_DEAD-box_CS"/>
</dbReference>
<dbReference type="InterPro" id="IPR014014">
    <property type="entry name" value="RNA_helicase_DEAD_Q_motif"/>
</dbReference>
<dbReference type="PANTHER" id="PTHR47958">
    <property type="entry name" value="ATP-DEPENDENT RNA HELICASE DBP3"/>
    <property type="match status" value="1"/>
</dbReference>
<dbReference type="Pfam" id="PF00270">
    <property type="entry name" value="DEAD"/>
    <property type="match status" value="1"/>
</dbReference>
<dbReference type="Pfam" id="PF00271">
    <property type="entry name" value="Helicase_C"/>
    <property type="match status" value="1"/>
</dbReference>
<dbReference type="SMART" id="SM00487">
    <property type="entry name" value="DEXDc"/>
    <property type="match status" value="1"/>
</dbReference>
<dbReference type="SMART" id="SM00490">
    <property type="entry name" value="HELICc"/>
    <property type="match status" value="1"/>
</dbReference>
<dbReference type="SUPFAM" id="SSF52540">
    <property type="entry name" value="P-loop containing nucleoside triphosphate hydrolases"/>
    <property type="match status" value="1"/>
</dbReference>
<dbReference type="PROSITE" id="PS00039">
    <property type="entry name" value="DEAD_ATP_HELICASE"/>
    <property type="match status" value="1"/>
</dbReference>
<dbReference type="PROSITE" id="PS51192">
    <property type="entry name" value="HELICASE_ATP_BIND_1"/>
    <property type="match status" value="1"/>
</dbReference>
<dbReference type="PROSITE" id="PS51194">
    <property type="entry name" value="HELICASE_CTER"/>
    <property type="match status" value="1"/>
</dbReference>
<dbReference type="PROSITE" id="PS51195">
    <property type="entry name" value="Q_MOTIF"/>
    <property type="match status" value="1"/>
</dbReference>
<evidence type="ECO:0000250" key="1"/>
<evidence type="ECO:0000255" key="2">
    <source>
        <dbReference type="PROSITE-ProRule" id="PRU00541"/>
    </source>
</evidence>
<evidence type="ECO:0000255" key="3">
    <source>
        <dbReference type="PROSITE-ProRule" id="PRU00542"/>
    </source>
</evidence>
<evidence type="ECO:0000269" key="4">
    <source>
    </source>
</evidence>
<evidence type="ECO:0000305" key="5"/>
<feature type="chain" id="PRO_0000054966" description="ATP-dependent RNA helicase eIF4A">
    <location>
        <begin position="1"/>
        <end position="392"/>
    </location>
</feature>
<feature type="domain" description="Helicase ATP-binding" evidence="2">
    <location>
        <begin position="50"/>
        <end position="220"/>
    </location>
</feature>
<feature type="domain" description="Helicase C-terminal" evidence="3">
    <location>
        <begin position="231"/>
        <end position="392"/>
    </location>
</feature>
<feature type="short sequence motif" description="Q motif">
    <location>
        <begin position="19"/>
        <end position="47"/>
    </location>
</feature>
<feature type="short sequence motif" description="DEAD box">
    <location>
        <begin position="168"/>
        <end position="171"/>
    </location>
</feature>
<feature type="binding site" evidence="2">
    <location>
        <begin position="63"/>
        <end position="70"/>
    </location>
    <ligand>
        <name>ATP</name>
        <dbReference type="ChEBI" id="CHEBI:30616"/>
    </ligand>
</feature>
<feature type="modified residue" description="Phosphoserine" evidence="4">
    <location>
        <position position="65"/>
    </location>
</feature>
<organism>
    <name type="scientific">Schizosaccharomyces pombe (strain 972 / ATCC 24843)</name>
    <name type="common">Fission yeast</name>
    <dbReference type="NCBI Taxonomy" id="284812"/>
    <lineage>
        <taxon>Eukaryota</taxon>
        <taxon>Fungi</taxon>
        <taxon>Dikarya</taxon>
        <taxon>Ascomycota</taxon>
        <taxon>Taphrinomycotina</taxon>
        <taxon>Schizosaccharomycetes</taxon>
        <taxon>Schizosaccharomycetales</taxon>
        <taxon>Schizosaccharomycetaceae</taxon>
        <taxon>Schizosaccharomyces</taxon>
    </lineage>
</organism>
<proteinExistence type="evidence at protein level"/>
<reference key="1">
    <citation type="journal article" date="1996" name="Yeast">
        <title>The translation initiation factor eIF4A from Schizosaccharomyces pombe is closely related to its mammalian counterpart.</title>
        <authorList>
            <person name="Fischli A."/>
            <person name="Schmid S.R."/>
            <person name="Coppolecchia R."/>
            <person name="Linder P."/>
        </authorList>
    </citation>
    <scope>NUCLEOTIDE SEQUENCE [MRNA]</scope>
</reference>
<reference key="2">
    <citation type="submission" date="1997-06" db="EMBL/GenBank/DDBJ databases">
        <authorList>
            <person name="Daga R.R."/>
            <person name="Jimenez J."/>
        </authorList>
    </citation>
    <scope>NUCLEOTIDE SEQUENCE [MRNA]</scope>
    <source>
        <strain>972 / ATCC 24843</strain>
    </source>
</reference>
<reference key="3">
    <citation type="journal article" date="2002" name="Nature">
        <title>The genome sequence of Schizosaccharomyces pombe.</title>
        <authorList>
            <person name="Wood V."/>
            <person name="Gwilliam R."/>
            <person name="Rajandream M.A."/>
            <person name="Lyne M.H."/>
            <person name="Lyne R."/>
            <person name="Stewart A."/>
            <person name="Sgouros J.G."/>
            <person name="Peat N."/>
            <person name="Hayles J."/>
            <person name="Baker S.G."/>
            <person name="Basham D."/>
            <person name="Bowman S."/>
            <person name="Brooks K."/>
            <person name="Brown D."/>
            <person name="Brown S."/>
            <person name="Chillingworth T."/>
            <person name="Churcher C.M."/>
            <person name="Collins M."/>
            <person name="Connor R."/>
            <person name="Cronin A."/>
            <person name="Davis P."/>
            <person name="Feltwell T."/>
            <person name="Fraser A."/>
            <person name="Gentles S."/>
            <person name="Goble A."/>
            <person name="Hamlin N."/>
            <person name="Harris D.E."/>
            <person name="Hidalgo J."/>
            <person name="Hodgson G."/>
            <person name="Holroyd S."/>
            <person name="Hornsby T."/>
            <person name="Howarth S."/>
            <person name="Huckle E.J."/>
            <person name="Hunt S."/>
            <person name="Jagels K."/>
            <person name="James K.D."/>
            <person name="Jones L."/>
            <person name="Jones M."/>
            <person name="Leather S."/>
            <person name="McDonald S."/>
            <person name="McLean J."/>
            <person name="Mooney P."/>
            <person name="Moule S."/>
            <person name="Mungall K.L."/>
            <person name="Murphy L.D."/>
            <person name="Niblett D."/>
            <person name="Odell C."/>
            <person name="Oliver K."/>
            <person name="O'Neil S."/>
            <person name="Pearson D."/>
            <person name="Quail M.A."/>
            <person name="Rabbinowitsch E."/>
            <person name="Rutherford K.M."/>
            <person name="Rutter S."/>
            <person name="Saunders D."/>
            <person name="Seeger K."/>
            <person name="Sharp S."/>
            <person name="Skelton J."/>
            <person name="Simmonds M.N."/>
            <person name="Squares R."/>
            <person name="Squares S."/>
            <person name="Stevens K."/>
            <person name="Taylor K."/>
            <person name="Taylor R.G."/>
            <person name="Tivey A."/>
            <person name="Walsh S.V."/>
            <person name="Warren T."/>
            <person name="Whitehead S."/>
            <person name="Woodward J.R."/>
            <person name="Volckaert G."/>
            <person name="Aert R."/>
            <person name="Robben J."/>
            <person name="Grymonprez B."/>
            <person name="Weltjens I."/>
            <person name="Vanstreels E."/>
            <person name="Rieger M."/>
            <person name="Schaefer M."/>
            <person name="Mueller-Auer S."/>
            <person name="Gabel C."/>
            <person name="Fuchs M."/>
            <person name="Duesterhoeft A."/>
            <person name="Fritzc C."/>
            <person name="Holzer E."/>
            <person name="Moestl D."/>
            <person name="Hilbert H."/>
            <person name="Borzym K."/>
            <person name="Langer I."/>
            <person name="Beck A."/>
            <person name="Lehrach H."/>
            <person name="Reinhardt R."/>
            <person name="Pohl T.M."/>
            <person name="Eger P."/>
            <person name="Zimmermann W."/>
            <person name="Wedler H."/>
            <person name="Wambutt R."/>
            <person name="Purnelle B."/>
            <person name="Goffeau A."/>
            <person name="Cadieu E."/>
            <person name="Dreano S."/>
            <person name="Gloux S."/>
            <person name="Lelaure V."/>
            <person name="Mottier S."/>
            <person name="Galibert F."/>
            <person name="Aves S.J."/>
            <person name="Xiang Z."/>
            <person name="Hunt C."/>
            <person name="Moore K."/>
            <person name="Hurst S.M."/>
            <person name="Lucas M."/>
            <person name="Rochet M."/>
            <person name="Gaillardin C."/>
            <person name="Tallada V.A."/>
            <person name="Garzon A."/>
            <person name="Thode G."/>
            <person name="Daga R.R."/>
            <person name="Cruzado L."/>
            <person name="Jimenez J."/>
            <person name="Sanchez M."/>
            <person name="del Rey F."/>
            <person name="Benito J."/>
            <person name="Dominguez A."/>
            <person name="Revuelta J.L."/>
            <person name="Moreno S."/>
            <person name="Armstrong J."/>
            <person name="Forsburg S.L."/>
            <person name="Cerutti L."/>
            <person name="Lowe T."/>
            <person name="McCombie W.R."/>
            <person name="Paulsen I."/>
            <person name="Potashkin J."/>
            <person name="Shpakovski G.V."/>
            <person name="Ussery D."/>
            <person name="Barrell B.G."/>
            <person name="Nurse P."/>
        </authorList>
    </citation>
    <scope>NUCLEOTIDE SEQUENCE [LARGE SCALE GENOMIC DNA]</scope>
    <source>
        <strain>972 / ATCC 24843</strain>
    </source>
</reference>
<reference key="4">
    <citation type="journal article" date="2008" name="J. Proteome Res.">
        <title>Phosphoproteome analysis of fission yeast.</title>
        <authorList>
            <person name="Wilson-Grady J.T."/>
            <person name="Villen J."/>
            <person name="Gygi S.P."/>
        </authorList>
    </citation>
    <scope>PHOSPHORYLATION [LARGE SCALE ANALYSIS] AT SER-65</scope>
    <scope>IDENTIFICATION BY MASS SPECTROMETRY</scope>
</reference>
<keyword id="KW-0067">ATP-binding</keyword>
<keyword id="KW-0963">Cytoplasm</keyword>
<keyword id="KW-0347">Helicase</keyword>
<keyword id="KW-0378">Hydrolase</keyword>
<keyword id="KW-0396">Initiation factor</keyword>
<keyword id="KW-0547">Nucleotide-binding</keyword>
<keyword id="KW-0597">Phosphoprotein</keyword>
<keyword id="KW-0648">Protein biosynthesis</keyword>
<keyword id="KW-1185">Reference proteome</keyword>
<keyword id="KW-0694">RNA-binding</keyword>